<name>CBPQ_PONAB</name>
<gene>
    <name type="primary">CPQ</name>
    <name type="synonym">PGCP</name>
</gene>
<evidence type="ECO:0000250" key="1"/>
<evidence type="ECO:0000255" key="2"/>
<evidence type="ECO:0000305" key="3"/>
<comment type="function">
    <text evidence="1">Carboxypeptidase that may play an important role in the hydrolysis of circulating peptides. Catalyzes the hydrolysis of dipeptides with unsubstituted terminals into amino acids. May play a role in the liberation of thyroxine hormone from its thyroglobulin (Tg) precursor (By similarity).</text>
</comment>
<comment type="subunit">
    <text evidence="1">Homodimer. The monomeric form is inactive while the homodimer is active (By similarity).</text>
</comment>
<comment type="subcellular location">
    <subcellularLocation>
        <location evidence="1">Endoplasmic reticulum</location>
    </subcellularLocation>
    <subcellularLocation>
        <location evidence="1">Golgi apparatus</location>
    </subcellularLocation>
    <subcellularLocation>
        <location evidence="1">Lysosome</location>
    </subcellularLocation>
    <subcellularLocation>
        <location evidence="1">Secreted</location>
    </subcellularLocation>
    <text evidence="1">Secretion is stimulated by TSH/thyroid-stimulating hormone, INS/insulin and SST/somatostatin.</text>
</comment>
<comment type="PTM">
    <text evidence="1">N-glycosylated. The secreted form is modified by hybrid or complex type oligosaccharide chains.</text>
</comment>
<comment type="similarity">
    <text evidence="3">Belongs to the peptidase M28 family.</text>
</comment>
<dbReference type="EC" id="3.4.17.-"/>
<dbReference type="EMBL" id="CR857867">
    <property type="protein sequence ID" value="CAH90120.1"/>
    <property type="molecule type" value="mRNA"/>
</dbReference>
<dbReference type="RefSeq" id="NP_001127240.1">
    <property type="nucleotide sequence ID" value="NM_001133768.1"/>
</dbReference>
<dbReference type="SMR" id="Q5RDN7"/>
<dbReference type="FunCoup" id="Q5RDN7">
    <property type="interactions" value="603"/>
</dbReference>
<dbReference type="STRING" id="9601.ENSPPYP00000021050"/>
<dbReference type="MEROPS" id="M28.014"/>
<dbReference type="GlyCosmos" id="Q5RDN7">
    <property type="glycosylation" value="5 sites, No reported glycans"/>
</dbReference>
<dbReference type="GeneID" id="100174295"/>
<dbReference type="KEGG" id="pon:100174295"/>
<dbReference type="CTD" id="10404"/>
<dbReference type="eggNOG" id="KOG2195">
    <property type="taxonomic scope" value="Eukaryota"/>
</dbReference>
<dbReference type="InParanoid" id="Q5RDN7"/>
<dbReference type="OrthoDB" id="10013407at2759"/>
<dbReference type="Proteomes" id="UP000001595">
    <property type="component" value="Unplaced"/>
</dbReference>
<dbReference type="GO" id="GO:0005737">
    <property type="term" value="C:cytoplasm"/>
    <property type="evidence" value="ECO:0000250"/>
    <property type="project" value="UniProtKB"/>
</dbReference>
<dbReference type="GO" id="GO:0005783">
    <property type="term" value="C:endoplasmic reticulum"/>
    <property type="evidence" value="ECO:0000250"/>
    <property type="project" value="UniProtKB"/>
</dbReference>
<dbReference type="GO" id="GO:0005615">
    <property type="term" value="C:extracellular space"/>
    <property type="evidence" value="ECO:0000250"/>
    <property type="project" value="UniProtKB"/>
</dbReference>
<dbReference type="GO" id="GO:0005794">
    <property type="term" value="C:Golgi apparatus"/>
    <property type="evidence" value="ECO:0000250"/>
    <property type="project" value="UniProtKB"/>
</dbReference>
<dbReference type="GO" id="GO:0005764">
    <property type="term" value="C:lysosome"/>
    <property type="evidence" value="ECO:0000250"/>
    <property type="project" value="UniProtKB"/>
</dbReference>
<dbReference type="GO" id="GO:0004180">
    <property type="term" value="F:carboxypeptidase activity"/>
    <property type="evidence" value="ECO:0007669"/>
    <property type="project" value="UniProtKB-KW"/>
</dbReference>
<dbReference type="GO" id="GO:0046872">
    <property type="term" value="F:metal ion binding"/>
    <property type="evidence" value="ECO:0007669"/>
    <property type="project" value="UniProtKB-KW"/>
</dbReference>
<dbReference type="GO" id="GO:0070573">
    <property type="term" value="F:metallodipeptidase activity"/>
    <property type="evidence" value="ECO:0000250"/>
    <property type="project" value="UniProtKB"/>
</dbReference>
<dbReference type="GO" id="GO:0042803">
    <property type="term" value="F:protein homodimerization activity"/>
    <property type="evidence" value="ECO:0000250"/>
    <property type="project" value="UniProtKB"/>
</dbReference>
<dbReference type="GO" id="GO:0043171">
    <property type="term" value="P:peptide catabolic process"/>
    <property type="evidence" value="ECO:0000250"/>
    <property type="project" value="UniProtKB"/>
</dbReference>
<dbReference type="GO" id="GO:0006508">
    <property type="term" value="P:proteolysis"/>
    <property type="evidence" value="ECO:0000250"/>
    <property type="project" value="UniProtKB"/>
</dbReference>
<dbReference type="GO" id="GO:0006590">
    <property type="term" value="P:thyroid hormone generation"/>
    <property type="evidence" value="ECO:0000250"/>
    <property type="project" value="UniProtKB"/>
</dbReference>
<dbReference type="GO" id="GO:0042246">
    <property type="term" value="P:tissue regeneration"/>
    <property type="evidence" value="ECO:0000250"/>
    <property type="project" value="UniProtKB"/>
</dbReference>
<dbReference type="CDD" id="cd03883">
    <property type="entry name" value="M28_Pgcp_like"/>
    <property type="match status" value="1"/>
</dbReference>
<dbReference type="FunFam" id="3.40.630.10:FF:000036">
    <property type="entry name" value="Carboxypeptidase Q"/>
    <property type="match status" value="1"/>
</dbReference>
<dbReference type="FunFam" id="3.40.630.10:FF:000112">
    <property type="entry name" value="Carboxypeptidase Q"/>
    <property type="match status" value="1"/>
</dbReference>
<dbReference type="FunFam" id="3.50.30.30:FF:000009">
    <property type="entry name" value="Carboxypeptidase Q"/>
    <property type="match status" value="1"/>
</dbReference>
<dbReference type="Gene3D" id="3.50.30.30">
    <property type="match status" value="1"/>
</dbReference>
<dbReference type="Gene3D" id="3.40.630.10">
    <property type="entry name" value="Zn peptidases"/>
    <property type="match status" value="1"/>
</dbReference>
<dbReference type="InterPro" id="IPR039866">
    <property type="entry name" value="CPQ"/>
</dbReference>
<dbReference type="InterPro" id="IPR007484">
    <property type="entry name" value="Peptidase_M28"/>
</dbReference>
<dbReference type="PANTHER" id="PTHR12053:SF3">
    <property type="entry name" value="CARBOXYPEPTIDASE Q"/>
    <property type="match status" value="1"/>
</dbReference>
<dbReference type="PANTHER" id="PTHR12053">
    <property type="entry name" value="PROTEASE FAMILY M28 PLASMA GLUTAMATE CARBOXYPEPTIDASE-RELATED"/>
    <property type="match status" value="1"/>
</dbReference>
<dbReference type="Pfam" id="PF04389">
    <property type="entry name" value="Peptidase_M28"/>
    <property type="match status" value="1"/>
</dbReference>
<dbReference type="SUPFAM" id="SSF53187">
    <property type="entry name" value="Zn-dependent exopeptidases"/>
    <property type="match status" value="1"/>
</dbReference>
<organism>
    <name type="scientific">Pongo abelii</name>
    <name type="common">Sumatran orangutan</name>
    <name type="synonym">Pongo pygmaeus abelii</name>
    <dbReference type="NCBI Taxonomy" id="9601"/>
    <lineage>
        <taxon>Eukaryota</taxon>
        <taxon>Metazoa</taxon>
        <taxon>Chordata</taxon>
        <taxon>Craniata</taxon>
        <taxon>Vertebrata</taxon>
        <taxon>Euteleostomi</taxon>
        <taxon>Mammalia</taxon>
        <taxon>Eutheria</taxon>
        <taxon>Euarchontoglires</taxon>
        <taxon>Primates</taxon>
        <taxon>Haplorrhini</taxon>
        <taxon>Catarrhini</taxon>
        <taxon>Hominidae</taxon>
        <taxon>Pongo</taxon>
    </lineage>
</organism>
<reference key="1">
    <citation type="submission" date="2004-11" db="EMBL/GenBank/DDBJ databases">
        <authorList>
            <consortium name="The German cDNA consortium"/>
        </authorList>
    </citation>
    <scope>NUCLEOTIDE SEQUENCE [LARGE SCALE MRNA]</scope>
    <source>
        <tissue>Kidney</tissue>
    </source>
</reference>
<protein>
    <recommendedName>
        <fullName>Carboxypeptidase Q</fullName>
        <ecNumber>3.4.17.-</ecNumber>
    </recommendedName>
    <alternativeName>
        <fullName>Plasma glutamate carboxypeptidase</fullName>
    </alternativeName>
</protein>
<sequence length="472" mass="52101">MKFLIFAFFGGVHLLSLCSGKAIYKNGISKRTFEEIKEEIASYGDVAKAIINLAVYGKAQNRSYERLALLVDTVGPRLSGSKNLEKAIQIMYQNLQQDELENVHLEPGRIPHWERGEESAVMLEPRIHKIAILGLGSSIGTPPEGITAEVLVVTSFDELQRRASEARGKIVVYNQPYINYSRTVQYRTQGAVEAAKVGALASLIRSVASFSIYSPHTGIQEYQDGVPRIPTACITVEDAEMMSRMASRGIRIVIQLKMGAKTYPDTDSFNTVAEITGSKYPEQVVLVSGHLDSWDVGQGAMDDGGGAFISWEALSLIKDLGLRPKRTLRLVLWTAEEQGGVGAFQYYQLHKVNISNYSLVMESDTGTFLPTGLQFTGSEKARAVMEEVMSLLQPLNVTQVLSHGEGTDINFWIKAGVPGASLLDDLYKYFFFHHSHGDTMTVMDPKQMNVAAAVWAVVSYVVADMEEMLPRS</sequence>
<proteinExistence type="evidence at transcript level"/>
<accession>Q5RDN7</accession>
<feature type="signal peptide" evidence="2">
    <location>
        <begin position="1"/>
        <end position="20"/>
    </location>
</feature>
<feature type="propeptide" id="PRO_0000312262" evidence="1">
    <location>
        <begin position="21"/>
        <end position="44"/>
    </location>
</feature>
<feature type="chain" id="PRO_0000312263" description="Carboxypeptidase Q">
    <location>
        <begin position="45"/>
        <end position="472"/>
    </location>
</feature>
<feature type="active site" description="Nucleophile" evidence="1">
    <location>
        <position position="336"/>
    </location>
</feature>
<feature type="binding site" evidence="1">
    <location>
        <position position="290"/>
    </location>
    <ligand>
        <name>Zn(2+)</name>
        <dbReference type="ChEBI" id="CHEBI:29105"/>
        <label>1</label>
    </ligand>
</feature>
<feature type="binding site" evidence="1">
    <location>
        <position position="302"/>
    </location>
    <ligand>
        <name>Zn(2+)</name>
        <dbReference type="ChEBI" id="CHEBI:29105"/>
        <label>1</label>
    </ligand>
</feature>
<feature type="binding site" evidence="1">
    <location>
        <position position="302"/>
    </location>
    <ligand>
        <name>Zn(2+)</name>
        <dbReference type="ChEBI" id="CHEBI:29105"/>
        <label>2</label>
        <note>catalytic</note>
    </ligand>
</feature>
<feature type="binding site" evidence="1">
    <location>
        <position position="337"/>
    </location>
    <ligand>
        <name>Zn(2+)</name>
        <dbReference type="ChEBI" id="CHEBI:29105"/>
        <label>2</label>
        <note>catalytic</note>
    </ligand>
</feature>
<feature type="binding site" evidence="1">
    <location>
        <position position="364"/>
    </location>
    <ligand>
        <name>Zn(2+)</name>
        <dbReference type="ChEBI" id="CHEBI:29105"/>
        <label>1</label>
    </ligand>
</feature>
<feature type="binding site" evidence="1">
    <location>
        <position position="434"/>
    </location>
    <ligand>
        <name>Zn(2+)</name>
        <dbReference type="ChEBI" id="CHEBI:29105"/>
        <label>2</label>
        <note>catalytic</note>
    </ligand>
</feature>
<feature type="glycosylation site" description="N-linked (GlcNAc...) asparagine" evidence="2">
    <location>
        <position position="61"/>
    </location>
</feature>
<feature type="glycosylation site" description="N-linked (GlcNAc...) asparagine" evidence="2">
    <location>
        <position position="179"/>
    </location>
</feature>
<feature type="glycosylation site" description="N-linked (GlcNAc...) asparagine" evidence="2">
    <location>
        <position position="353"/>
    </location>
</feature>
<feature type="glycosylation site" description="N-linked (GlcNAc...) asparagine" evidence="2">
    <location>
        <position position="356"/>
    </location>
</feature>
<feature type="glycosylation site" description="N-linked (GlcNAc...) asparagine" evidence="2">
    <location>
        <position position="396"/>
    </location>
</feature>
<keyword id="KW-0121">Carboxypeptidase</keyword>
<keyword id="KW-0256">Endoplasmic reticulum</keyword>
<keyword id="KW-0325">Glycoprotein</keyword>
<keyword id="KW-0333">Golgi apparatus</keyword>
<keyword id="KW-0378">Hydrolase</keyword>
<keyword id="KW-0458">Lysosome</keyword>
<keyword id="KW-0479">Metal-binding</keyword>
<keyword id="KW-0482">Metalloprotease</keyword>
<keyword id="KW-0645">Protease</keyword>
<keyword id="KW-1185">Reference proteome</keyword>
<keyword id="KW-0964">Secreted</keyword>
<keyword id="KW-0732">Signal</keyword>
<keyword id="KW-0862">Zinc</keyword>
<keyword id="KW-0865">Zymogen</keyword>